<accession>P57588</accession>
<organism>
    <name type="scientific">Buchnera aphidicola subsp. Acyrthosiphon pisum (strain APS)</name>
    <name type="common">Acyrthosiphon pisum symbiotic bacterium</name>
    <dbReference type="NCBI Taxonomy" id="107806"/>
    <lineage>
        <taxon>Bacteria</taxon>
        <taxon>Pseudomonadati</taxon>
        <taxon>Pseudomonadota</taxon>
        <taxon>Gammaproteobacteria</taxon>
        <taxon>Enterobacterales</taxon>
        <taxon>Erwiniaceae</taxon>
        <taxon>Buchnera</taxon>
    </lineage>
</organism>
<comment type="function">
    <text evidence="1">One of the primary rRNA binding proteins. Required for association of the 30S and 50S subunits to form the 70S ribosome, for tRNA binding and peptide bond formation. It has been suggested to have peptidyltransferase activity; this is somewhat controversial. Makes several contacts with the 16S rRNA in the 70S ribosome.</text>
</comment>
<comment type="subunit">
    <text evidence="1">Part of the 50S ribosomal subunit. Forms a bridge to the 30S subunit in the 70S ribosome.</text>
</comment>
<comment type="similarity">
    <text evidence="1">Belongs to the universal ribosomal protein uL2 family.</text>
</comment>
<evidence type="ECO:0000255" key="1">
    <source>
        <dbReference type="HAMAP-Rule" id="MF_01320"/>
    </source>
</evidence>
<evidence type="ECO:0000256" key="2">
    <source>
        <dbReference type="SAM" id="MobiDB-lite"/>
    </source>
</evidence>
<evidence type="ECO:0000305" key="3"/>
<keyword id="KW-1185">Reference proteome</keyword>
<keyword id="KW-0687">Ribonucleoprotein</keyword>
<keyword id="KW-0689">Ribosomal protein</keyword>
<keyword id="KW-0694">RNA-binding</keyword>
<keyword id="KW-0699">rRNA-binding</keyword>
<protein>
    <recommendedName>
        <fullName evidence="1">Large ribosomal subunit protein uL2</fullName>
    </recommendedName>
    <alternativeName>
        <fullName evidence="3">50S ribosomal protein L2</fullName>
    </alternativeName>
</protein>
<dbReference type="EMBL" id="BA000003">
    <property type="protein sequence ID" value="BAB13214.1"/>
    <property type="molecule type" value="Genomic_DNA"/>
</dbReference>
<dbReference type="RefSeq" id="NP_240328.1">
    <property type="nucleotide sequence ID" value="NC_002528.1"/>
</dbReference>
<dbReference type="RefSeq" id="WP_009874472.1">
    <property type="nucleotide sequence ID" value="NZ_AP036055.1"/>
</dbReference>
<dbReference type="SMR" id="P57588"/>
<dbReference type="STRING" id="563178.BUAP5A_514"/>
<dbReference type="EnsemblBacteria" id="BAB13214">
    <property type="protein sequence ID" value="BAB13214"/>
    <property type="gene ID" value="BAB13214"/>
</dbReference>
<dbReference type="KEGG" id="buc:BU521"/>
<dbReference type="PATRIC" id="fig|107806.10.peg.526"/>
<dbReference type="eggNOG" id="COG0090">
    <property type="taxonomic scope" value="Bacteria"/>
</dbReference>
<dbReference type="HOGENOM" id="CLU_036235_2_1_6"/>
<dbReference type="Proteomes" id="UP000001806">
    <property type="component" value="Chromosome"/>
</dbReference>
<dbReference type="GO" id="GO:0015934">
    <property type="term" value="C:large ribosomal subunit"/>
    <property type="evidence" value="ECO:0007669"/>
    <property type="project" value="InterPro"/>
</dbReference>
<dbReference type="GO" id="GO:0019843">
    <property type="term" value="F:rRNA binding"/>
    <property type="evidence" value="ECO:0007669"/>
    <property type="project" value="UniProtKB-UniRule"/>
</dbReference>
<dbReference type="GO" id="GO:0003735">
    <property type="term" value="F:structural constituent of ribosome"/>
    <property type="evidence" value="ECO:0007669"/>
    <property type="project" value="InterPro"/>
</dbReference>
<dbReference type="GO" id="GO:0016740">
    <property type="term" value="F:transferase activity"/>
    <property type="evidence" value="ECO:0007669"/>
    <property type="project" value="InterPro"/>
</dbReference>
<dbReference type="GO" id="GO:0002181">
    <property type="term" value="P:cytoplasmic translation"/>
    <property type="evidence" value="ECO:0007669"/>
    <property type="project" value="TreeGrafter"/>
</dbReference>
<dbReference type="FunFam" id="2.30.30.30:FF:000001">
    <property type="entry name" value="50S ribosomal protein L2"/>
    <property type="match status" value="1"/>
</dbReference>
<dbReference type="FunFam" id="2.40.50.140:FF:000003">
    <property type="entry name" value="50S ribosomal protein L2"/>
    <property type="match status" value="1"/>
</dbReference>
<dbReference type="FunFam" id="4.10.950.10:FF:000001">
    <property type="entry name" value="50S ribosomal protein L2"/>
    <property type="match status" value="1"/>
</dbReference>
<dbReference type="Gene3D" id="2.30.30.30">
    <property type="match status" value="1"/>
</dbReference>
<dbReference type="Gene3D" id="2.40.50.140">
    <property type="entry name" value="Nucleic acid-binding proteins"/>
    <property type="match status" value="1"/>
</dbReference>
<dbReference type="Gene3D" id="4.10.950.10">
    <property type="entry name" value="Ribosomal protein L2, domain 3"/>
    <property type="match status" value="1"/>
</dbReference>
<dbReference type="HAMAP" id="MF_01320_B">
    <property type="entry name" value="Ribosomal_uL2_B"/>
    <property type="match status" value="1"/>
</dbReference>
<dbReference type="InterPro" id="IPR012340">
    <property type="entry name" value="NA-bd_OB-fold"/>
</dbReference>
<dbReference type="InterPro" id="IPR014722">
    <property type="entry name" value="Rib_uL2_dom2"/>
</dbReference>
<dbReference type="InterPro" id="IPR002171">
    <property type="entry name" value="Ribosomal_uL2"/>
</dbReference>
<dbReference type="InterPro" id="IPR005880">
    <property type="entry name" value="Ribosomal_uL2_bac/org-type"/>
</dbReference>
<dbReference type="InterPro" id="IPR022669">
    <property type="entry name" value="Ribosomal_uL2_C"/>
</dbReference>
<dbReference type="InterPro" id="IPR022671">
    <property type="entry name" value="Ribosomal_uL2_CS"/>
</dbReference>
<dbReference type="InterPro" id="IPR014726">
    <property type="entry name" value="Ribosomal_uL2_dom3"/>
</dbReference>
<dbReference type="InterPro" id="IPR022666">
    <property type="entry name" value="Ribosomal_uL2_RNA-bd_dom"/>
</dbReference>
<dbReference type="InterPro" id="IPR008991">
    <property type="entry name" value="Translation_prot_SH3-like_sf"/>
</dbReference>
<dbReference type="NCBIfam" id="TIGR01171">
    <property type="entry name" value="rplB_bact"/>
    <property type="match status" value="1"/>
</dbReference>
<dbReference type="PANTHER" id="PTHR13691:SF5">
    <property type="entry name" value="LARGE RIBOSOMAL SUBUNIT PROTEIN UL2M"/>
    <property type="match status" value="1"/>
</dbReference>
<dbReference type="PANTHER" id="PTHR13691">
    <property type="entry name" value="RIBOSOMAL PROTEIN L2"/>
    <property type="match status" value="1"/>
</dbReference>
<dbReference type="Pfam" id="PF00181">
    <property type="entry name" value="Ribosomal_L2"/>
    <property type="match status" value="1"/>
</dbReference>
<dbReference type="Pfam" id="PF03947">
    <property type="entry name" value="Ribosomal_L2_C"/>
    <property type="match status" value="1"/>
</dbReference>
<dbReference type="PIRSF" id="PIRSF002158">
    <property type="entry name" value="Ribosomal_L2"/>
    <property type="match status" value="1"/>
</dbReference>
<dbReference type="SMART" id="SM01383">
    <property type="entry name" value="Ribosomal_L2"/>
    <property type="match status" value="1"/>
</dbReference>
<dbReference type="SMART" id="SM01382">
    <property type="entry name" value="Ribosomal_L2_C"/>
    <property type="match status" value="1"/>
</dbReference>
<dbReference type="SUPFAM" id="SSF50249">
    <property type="entry name" value="Nucleic acid-binding proteins"/>
    <property type="match status" value="1"/>
</dbReference>
<dbReference type="SUPFAM" id="SSF50104">
    <property type="entry name" value="Translation proteins SH3-like domain"/>
    <property type="match status" value="1"/>
</dbReference>
<dbReference type="PROSITE" id="PS00467">
    <property type="entry name" value="RIBOSOMAL_L2"/>
    <property type="match status" value="1"/>
</dbReference>
<proteinExistence type="inferred from homology"/>
<gene>
    <name evidence="1" type="primary">rplB</name>
    <name type="ordered locus">BU521</name>
</gene>
<feature type="chain" id="PRO_0000129539" description="Large ribosomal subunit protein uL2">
    <location>
        <begin position="1"/>
        <end position="273"/>
    </location>
</feature>
<feature type="region of interest" description="Disordered" evidence="2">
    <location>
        <begin position="224"/>
        <end position="264"/>
    </location>
</feature>
<feature type="compositionally biased region" description="Basic residues" evidence="2">
    <location>
        <begin position="253"/>
        <end position="264"/>
    </location>
</feature>
<reference key="1">
    <citation type="journal article" date="2000" name="Nature">
        <title>Genome sequence of the endocellular bacterial symbiont of aphids Buchnera sp. APS.</title>
        <authorList>
            <person name="Shigenobu S."/>
            <person name="Watanabe H."/>
            <person name="Hattori M."/>
            <person name="Sakaki Y."/>
            <person name="Ishikawa H."/>
        </authorList>
    </citation>
    <scope>NUCLEOTIDE SEQUENCE [LARGE SCALE GENOMIC DNA]</scope>
    <source>
        <strain>APS</strain>
    </source>
</reference>
<name>RL2_BUCAI</name>
<sequence length="273" mass="30361">MAVVKCKPTSPGRRHVIKVVNNELYKGKPYSLLLRKKSKSGGRNNNGRITTRHIGGGHKRAYRIVDFKRNKDDIGATVERFEYDPNRSSNIALILYKDGERKYILAPKGIKIGDTIISGLRAPIKTGNTLPLKNIPVGTFVHNVELKPGKGGQIARSAGSYVQLVAFDEEYATLRLRSGEMRKTQSNCRATIGEVGNSEHMLKVLGKAGASRWIGIRPTVRGTAMNPVDHPHGGGEGRNFGKHPVTPWGIQTKGKKTRKNKRTDKFILRHRRK</sequence>